<name>RM38_NEUCR</name>
<proteinExistence type="evidence at protein level"/>
<dbReference type="EMBL" id="CM002238">
    <property type="protein sequence ID" value="EAA33798.2"/>
    <property type="molecule type" value="Genomic_DNA"/>
</dbReference>
<dbReference type="RefSeq" id="XP_963034.2">
    <property type="nucleotide sequence ID" value="XM_957941.3"/>
</dbReference>
<dbReference type="PDB" id="6YWS">
    <property type="method" value="EM"/>
    <property type="resolution" value="2.74 A"/>
    <property type="chains" value="I=1-131"/>
</dbReference>
<dbReference type="PDB" id="6YWV">
    <property type="method" value="EM"/>
    <property type="resolution" value="3.03 A"/>
    <property type="chains" value="I=1-131"/>
</dbReference>
<dbReference type="PDB" id="6YWX">
    <property type="method" value="EM"/>
    <property type="resolution" value="3.10 A"/>
    <property type="chains" value="I=1-131"/>
</dbReference>
<dbReference type="PDBsum" id="6YWS"/>
<dbReference type="PDBsum" id="6YWV"/>
<dbReference type="PDBsum" id="6YWX"/>
<dbReference type="EMDB" id="EMD-10973"/>
<dbReference type="EMDB" id="EMD-10977"/>
<dbReference type="EMDB" id="EMD-10978"/>
<dbReference type="SMR" id="Q7SBJ8"/>
<dbReference type="FunCoup" id="Q7SBJ8">
    <property type="interactions" value="347"/>
</dbReference>
<dbReference type="STRING" id="367110.Q7SBJ8"/>
<dbReference type="PaxDb" id="5141-EFNCRP00000004729"/>
<dbReference type="EnsemblFungi" id="EAA33798">
    <property type="protein sequence ID" value="EAA33798"/>
    <property type="gene ID" value="NCU08552"/>
</dbReference>
<dbReference type="GeneID" id="3879173"/>
<dbReference type="KEGG" id="ncr:NCU08552"/>
<dbReference type="VEuPathDB" id="FungiDB:NCU08552"/>
<dbReference type="HOGENOM" id="CLU_095071_2_0_1"/>
<dbReference type="InParanoid" id="Q7SBJ8"/>
<dbReference type="OMA" id="IVCVVQK"/>
<dbReference type="OrthoDB" id="274765at2759"/>
<dbReference type="Proteomes" id="UP000001805">
    <property type="component" value="Chromosome 3, Linkage Group III"/>
</dbReference>
<dbReference type="GO" id="GO:0005762">
    <property type="term" value="C:mitochondrial large ribosomal subunit"/>
    <property type="evidence" value="ECO:0000318"/>
    <property type="project" value="GO_Central"/>
</dbReference>
<dbReference type="GO" id="GO:0070180">
    <property type="term" value="F:large ribosomal subunit rRNA binding"/>
    <property type="evidence" value="ECO:0000318"/>
    <property type="project" value="GO_Central"/>
</dbReference>
<dbReference type="GO" id="GO:0003735">
    <property type="term" value="F:structural constituent of ribosome"/>
    <property type="evidence" value="ECO:0000318"/>
    <property type="project" value="GO_Central"/>
</dbReference>
<dbReference type="GO" id="GO:0006412">
    <property type="term" value="P:translation"/>
    <property type="evidence" value="ECO:0007669"/>
    <property type="project" value="InterPro"/>
</dbReference>
<dbReference type="CDD" id="cd00337">
    <property type="entry name" value="Ribosomal_uL14"/>
    <property type="match status" value="1"/>
</dbReference>
<dbReference type="FunFam" id="2.40.150.20:FF:000005">
    <property type="entry name" value="50S ribosomal protein L14"/>
    <property type="match status" value="1"/>
</dbReference>
<dbReference type="Gene3D" id="2.40.150.20">
    <property type="entry name" value="Ribosomal protein L14"/>
    <property type="match status" value="1"/>
</dbReference>
<dbReference type="HAMAP" id="MF_01367">
    <property type="entry name" value="Ribosomal_uL14"/>
    <property type="match status" value="1"/>
</dbReference>
<dbReference type="InterPro" id="IPR000218">
    <property type="entry name" value="Ribosomal_uL14"/>
</dbReference>
<dbReference type="InterPro" id="IPR005745">
    <property type="entry name" value="Ribosomal_uL14_bac-type"/>
</dbReference>
<dbReference type="InterPro" id="IPR019972">
    <property type="entry name" value="Ribosomal_uL14_CS"/>
</dbReference>
<dbReference type="InterPro" id="IPR036853">
    <property type="entry name" value="Ribosomal_uL14_sf"/>
</dbReference>
<dbReference type="NCBIfam" id="TIGR01067">
    <property type="entry name" value="rplN_bact"/>
    <property type="match status" value="1"/>
</dbReference>
<dbReference type="PANTHER" id="PTHR11761">
    <property type="entry name" value="50S/60S RIBOSOMAL PROTEIN L14/L23"/>
    <property type="match status" value="1"/>
</dbReference>
<dbReference type="PANTHER" id="PTHR11761:SF3">
    <property type="entry name" value="LARGE RIBOSOMAL SUBUNIT PROTEIN UL14M"/>
    <property type="match status" value="1"/>
</dbReference>
<dbReference type="Pfam" id="PF00238">
    <property type="entry name" value="Ribosomal_L14"/>
    <property type="match status" value="1"/>
</dbReference>
<dbReference type="SMART" id="SM01374">
    <property type="entry name" value="Ribosomal_L14"/>
    <property type="match status" value="1"/>
</dbReference>
<dbReference type="SUPFAM" id="SSF50193">
    <property type="entry name" value="Ribosomal protein L14"/>
    <property type="match status" value="1"/>
</dbReference>
<dbReference type="PROSITE" id="PS00049">
    <property type="entry name" value="RIBOSOMAL_L14"/>
    <property type="match status" value="1"/>
</dbReference>
<evidence type="ECO:0000269" key="1">
    <source>
    </source>
</evidence>
<evidence type="ECO:0000303" key="2">
    <source>
    </source>
</evidence>
<evidence type="ECO:0000305" key="3"/>
<evidence type="ECO:0000305" key="4">
    <source>
    </source>
</evidence>
<evidence type="ECO:0007744" key="5">
    <source>
        <dbReference type="PDB" id="6YWS"/>
    </source>
</evidence>
<evidence type="ECO:0007744" key="6">
    <source>
        <dbReference type="PDB" id="6YWV"/>
    </source>
</evidence>
<gene>
    <name type="primary">mrpl38</name>
    <name type="ORF">NCU08552</name>
</gene>
<feature type="chain" id="PRO_0000458612" description="Large ribosomal subunit protein uL14m">
    <location>
        <begin position="1"/>
        <end position="131"/>
    </location>
</feature>
<protein>
    <recommendedName>
        <fullName evidence="2">Large ribosomal subunit protein uL14m</fullName>
    </recommendedName>
</protein>
<comment type="function">
    <text evidence="4">Component of the mitochondrial ribosome (mitoribosome), a dedicated translation machinery responsible for the synthesis of mitochondrial genome-encoded proteins, including at least some of the essential transmembrane subunits of the mitochondrial respiratory chain. The mitoribosomes are attached to the mitochondrial inner membrane and translation products are cotranslationally integrated into the membrane.</text>
</comment>
<comment type="subunit">
    <text evidence="1">Component of the mitochondrial large ribosomal subunit (mt-LSU). Mature N.crassa 74S mitochondrial ribosomes consist of a small (37S) and a large (54S) subunit. The 37S small subunit contains a 16S ribosomal RNA (16S mt-rRNA) and 32 different proteins. The 54S large subunit contains a 23S rRNA (23S mt-rRNA) and 42 different proteins.</text>
</comment>
<comment type="subcellular location">
    <subcellularLocation>
        <location evidence="1">Mitochondrion</location>
    </subcellularLocation>
</comment>
<comment type="similarity">
    <text evidence="3">Belongs to the universal ribosomal protein uL14 family.</text>
</comment>
<accession>Q7SBJ8</accession>
<sequence length="131" mass="14111">MIQLKTMLNCIDNSGAALVECAMVVGQKRHASIGDRIVVVVQKQRGADSAGMAASSAATKVKRGDIRHAVVVRTKQKVQRRDGSVVRFDDNACVLINKAGDPIGSRINGVVGQELRKKKWSKILSMAPMQA</sequence>
<reference key="1">
    <citation type="journal article" date="2003" name="Nature">
        <title>The genome sequence of the filamentous fungus Neurospora crassa.</title>
        <authorList>
            <person name="Galagan J.E."/>
            <person name="Calvo S.E."/>
            <person name="Borkovich K.A."/>
            <person name="Selker E.U."/>
            <person name="Read N.D."/>
            <person name="Jaffe D.B."/>
            <person name="FitzHugh W."/>
            <person name="Ma L.-J."/>
            <person name="Smirnov S."/>
            <person name="Purcell S."/>
            <person name="Rehman B."/>
            <person name="Elkins T."/>
            <person name="Engels R."/>
            <person name="Wang S."/>
            <person name="Nielsen C.B."/>
            <person name="Butler J."/>
            <person name="Endrizzi M."/>
            <person name="Qui D."/>
            <person name="Ianakiev P."/>
            <person name="Bell-Pedersen D."/>
            <person name="Nelson M.A."/>
            <person name="Werner-Washburne M."/>
            <person name="Selitrennikoff C.P."/>
            <person name="Kinsey J.A."/>
            <person name="Braun E.L."/>
            <person name="Zelter A."/>
            <person name="Schulte U."/>
            <person name="Kothe G.O."/>
            <person name="Jedd G."/>
            <person name="Mewes H.-W."/>
            <person name="Staben C."/>
            <person name="Marcotte E."/>
            <person name="Greenberg D."/>
            <person name="Roy A."/>
            <person name="Foley K."/>
            <person name="Naylor J."/>
            <person name="Stange-Thomann N."/>
            <person name="Barrett R."/>
            <person name="Gnerre S."/>
            <person name="Kamal M."/>
            <person name="Kamvysselis M."/>
            <person name="Mauceli E.W."/>
            <person name="Bielke C."/>
            <person name="Rudd S."/>
            <person name="Frishman D."/>
            <person name="Krystofova S."/>
            <person name="Rasmussen C."/>
            <person name="Metzenberg R.L."/>
            <person name="Perkins D.D."/>
            <person name="Kroken S."/>
            <person name="Cogoni C."/>
            <person name="Macino G."/>
            <person name="Catcheside D.E.A."/>
            <person name="Li W."/>
            <person name="Pratt R.J."/>
            <person name="Osmani S.A."/>
            <person name="DeSouza C.P.C."/>
            <person name="Glass N.L."/>
            <person name="Orbach M.J."/>
            <person name="Berglund J.A."/>
            <person name="Voelker R."/>
            <person name="Yarden O."/>
            <person name="Plamann M."/>
            <person name="Seiler S."/>
            <person name="Dunlap J.C."/>
            <person name="Radford A."/>
            <person name="Aramayo R."/>
            <person name="Natvig D.O."/>
            <person name="Alex L.A."/>
            <person name="Mannhaupt G."/>
            <person name="Ebbole D.J."/>
            <person name="Freitag M."/>
            <person name="Paulsen I."/>
            <person name="Sachs M.S."/>
            <person name="Lander E.S."/>
            <person name="Nusbaum C."/>
            <person name="Birren B.W."/>
        </authorList>
    </citation>
    <scope>NUCLEOTIDE SEQUENCE [LARGE SCALE GENOMIC DNA]</scope>
    <source>
        <strain>ATCC 24698 / 74-OR23-1A / CBS 708.71 / DSM 1257 / FGSC 987</strain>
    </source>
</reference>
<reference evidence="5 6" key="2">
    <citation type="journal article" date="2020" name="Nat. Commun.">
        <title>Analysis of translating mitoribosome reveals functional characteristics of translation in mitochondria of fungi.</title>
        <authorList>
            <person name="Itoh Y."/>
            <person name="Naschberger A."/>
            <person name="Mortezaei N."/>
            <person name="Herrmann J.M."/>
            <person name="Amunts A."/>
        </authorList>
    </citation>
    <scope>STRUCTURE BY ELECTRON MICROSCOPY (2.74 ANGSTROMS)</scope>
</reference>
<keyword id="KW-0002">3D-structure</keyword>
<keyword id="KW-0496">Mitochondrion</keyword>
<keyword id="KW-1185">Reference proteome</keyword>
<keyword id="KW-0687">Ribonucleoprotein</keyword>
<keyword id="KW-0689">Ribosomal protein</keyword>
<organism>
    <name type="scientific">Neurospora crassa (strain ATCC 24698 / 74-OR23-1A / CBS 708.71 / DSM 1257 / FGSC 987)</name>
    <dbReference type="NCBI Taxonomy" id="367110"/>
    <lineage>
        <taxon>Eukaryota</taxon>
        <taxon>Fungi</taxon>
        <taxon>Dikarya</taxon>
        <taxon>Ascomycota</taxon>
        <taxon>Pezizomycotina</taxon>
        <taxon>Sordariomycetes</taxon>
        <taxon>Sordariomycetidae</taxon>
        <taxon>Sordariales</taxon>
        <taxon>Sordariaceae</taxon>
        <taxon>Neurospora</taxon>
    </lineage>
</organism>